<dbReference type="EMBL" id="L42023">
    <property type="protein sequence ID" value="AAC22977.1"/>
    <property type="molecule type" value="Genomic_DNA"/>
</dbReference>
<dbReference type="RefSeq" id="NP_439484.1">
    <property type="nucleotide sequence ID" value="NC_000907.1"/>
</dbReference>
<dbReference type="PDB" id="1JO0">
    <property type="method" value="X-ray"/>
    <property type="resolution" value="1.37 A"/>
    <property type="chains" value="A/B=2-99"/>
</dbReference>
<dbReference type="PDBsum" id="1JO0"/>
<dbReference type="SMR" id="P71376"/>
<dbReference type="STRING" id="71421.HI_1333"/>
<dbReference type="EnsemblBacteria" id="AAC22977">
    <property type="protein sequence ID" value="AAC22977"/>
    <property type="gene ID" value="HI_1333"/>
</dbReference>
<dbReference type="KEGG" id="hin:HI_1333"/>
<dbReference type="PATRIC" id="fig|71421.8.peg.1385"/>
<dbReference type="eggNOG" id="COG1534">
    <property type="taxonomic scope" value="Bacteria"/>
</dbReference>
<dbReference type="HOGENOM" id="CLU_095994_2_0_6"/>
<dbReference type="OrthoDB" id="9797519at2"/>
<dbReference type="PhylomeDB" id="P71376"/>
<dbReference type="BioCyc" id="HINF71421:G1GJ1-1357-MONOMER"/>
<dbReference type="EvolutionaryTrace" id="P71376"/>
<dbReference type="Proteomes" id="UP000000579">
    <property type="component" value="Chromosome"/>
</dbReference>
<dbReference type="GO" id="GO:0003723">
    <property type="term" value="F:RNA binding"/>
    <property type="evidence" value="ECO:0007669"/>
    <property type="project" value="UniProtKB-KW"/>
</dbReference>
<dbReference type="Gene3D" id="3.30.110.60">
    <property type="entry name" value="YhbY-like"/>
    <property type="match status" value="1"/>
</dbReference>
<dbReference type="InterPro" id="IPR001890">
    <property type="entry name" value="RNA-binding_CRM"/>
</dbReference>
<dbReference type="InterPro" id="IPR051925">
    <property type="entry name" value="RNA-binding_domain"/>
</dbReference>
<dbReference type="InterPro" id="IPR017924">
    <property type="entry name" value="RNA-binding_YhbY"/>
</dbReference>
<dbReference type="InterPro" id="IPR035920">
    <property type="entry name" value="YhbY-like_sf"/>
</dbReference>
<dbReference type="NCBIfam" id="TIGR00253">
    <property type="entry name" value="RNA_bind_YhbY"/>
    <property type="match status" value="1"/>
</dbReference>
<dbReference type="PANTHER" id="PTHR40065">
    <property type="entry name" value="RNA-BINDING PROTEIN YHBY"/>
    <property type="match status" value="1"/>
</dbReference>
<dbReference type="PANTHER" id="PTHR40065:SF3">
    <property type="entry name" value="RNA-BINDING PROTEIN YHBY"/>
    <property type="match status" value="1"/>
</dbReference>
<dbReference type="Pfam" id="PF01985">
    <property type="entry name" value="CRS1_YhbY"/>
    <property type="match status" value="1"/>
</dbReference>
<dbReference type="SMART" id="SM01103">
    <property type="entry name" value="CRS1_YhbY"/>
    <property type="match status" value="1"/>
</dbReference>
<dbReference type="SUPFAM" id="SSF75471">
    <property type="entry name" value="YhbY-like"/>
    <property type="match status" value="1"/>
</dbReference>
<dbReference type="PROSITE" id="PS51295">
    <property type="entry name" value="CRM"/>
    <property type="match status" value="1"/>
</dbReference>
<organism>
    <name type="scientific">Haemophilus influenzae (strain ATCC 51907 / DSM 11121 / KW20 / Rd)</name>
    <dbReference type="NCBI Taxonomy" id="71421"/>
    <lineage>
        <taxon>Bacteria</taxon>
        <taxon>Pseudomonadati</taxon>
        <taxon>Pseudomonadota</taxon>
        <taxon>Gammaproteobacteria</taxon>
        <taxon>Pasteurellales</taxon>
        <taxon>Pasteurellaceae</taxon>
        <taxon>Haemophilus</taxon>
    </lineage>
</organism>
<feature type="chain" id="PRO_0000202167" description="RNA-binding protein HI_1333">
    <location>
        <begin position="1"/>
        <end position="99"/>
    </location>
</feature>
<feature type="domain" description="CRM" evidence="1">
    <location>
        <begin position="2"/>
        <end position="98"/>
    </location>
</feature>
<feature type="helix" evidence="2">
    <location>
        <begin position="6"/>
        <end position="16"/>
    </location>
</feature>
<feature type="strand" evidence="2">
    <location>
        <begin position="22"/>
        <end position="25"/>
    </location>
</feature>
<feature type="helix" evidence="2">
    <location>
        <begin position="32"/>
        <end position="45"/>
    </location>
</feature>
<feature type="strand" evidence="2">
    <location>
        <begin position="46"/>
        <end position="52"/>
    </location>
</feature>
<feature type="helix" evidence="2">
    <location>
        <begin position="57"/>
        <end position="71"/>
    </location>
</feature>
<feature type="strand" evidence="2">
    <location>
        <begin position="74"/>
        <end position="79"/>
    </location>
</feature>
<feature type="strand" evidence="2">
    <location>
        <begin position="82"/>
        <end position="86"/>
    </location>
</feature>
<proteinExistence type="evidence at protein level"/>
<name>Y1333_HAEIN</name>
<accession>P71376</accession>
<protein>
    <recommendedName>
        <fullName>RNA-binding protein HI_1333</fullName>
    </recommendedName>
</protein>
<keyword id="KW-0002">3D-structure</keyword>
<keyword id="KW-1185">Reference proteome</keyword>
<keyword id="KW-0694">RNA-binding</keyword>
<evidence type="ECO:0000255" key="1">
    <source>
        <dbReference type="PROSITE-ProRule" id="PRU00626"/>
    </source>
</evidence>
<evidence type="ECO:0007829" key="2">
    <source>
        <dbReference type="PDB" id="1JO0"/>
    </source>
</evidence>
<gene>
    <name type="ordered locus">HI_1333</name>
</gene>
<sequence length="99" mass="10924">MTTLSTKQKQFLKGLAHHLNPVVMLGGNGLTEGVLAEIENALNHHELIKVKVAGADRETKQLIINAIVRETKAAQVQTIGHILVLYRPSEEAKIQLPRK</sequence>
<reference key="1">
    <citation type="journal article" date="1995" name="Science">
        <title>Whole-genome random sequencing and assembly of Haemophilus influenzae Rd.</title>
        <authorList>
            <person name="Fleischmann R.D."/>
            <person name="Adams M.D."/>
            <person name="White O."/>
            <person name="Clayton R.A."/>
            <person name="Kirkness E.F."/>
            <person name="Kerlavage A.R."/>
            <person name="Bult C.J."/>
            <person name="Tomb J.-F."/>
            <person name="Dougherty B.A."/>
            <person name="Merrick J.M."/>
            <person name="McKenney K."/>
            <person name="Sutton G.G."/>
            <person name="FitzHugh W."/>
            <person name="Fields C.A."/>
            <person name="Gocayne J.D."/>
            <person name="Scott J.D."/>
            <person name="Shirley R."/>
            <person name="Liu L.-I."/>
            <person name="Glodek A."/>
            <person name="Kelley J.M."/>
            <person name="Weidman J.F."/>
            <person name="Phillips C.A."/>
            <person name="Spriggs T."/>
            <person name="Hedblom E."/>
            <person name="Cotton M.D."/>
            <person name="Utterback T.R."/>
            <person name="Hanna M.C."/>
            <person name="Nguyen D.T."/>
            <person name="Saudek D.M."/>
            <person name="Brandon R.C."/>
            <person name="Fine L.D."/>
            <person name="Fritchman J.L."/>
            <person name="Fuhrmann J.L."/>
            <person name="Geoghagen N.S.M."/>
            <person name="Gnehm C.L."/>
            <person name="McDonald L.A."/>
            <person name="Small K.V."/>
            <person name="Fraser C.M."/>
            <person name="Smith H.O."/>
            <person name="Venter J.C."/>
        </authorList>
    </citation>
    <scope>NUCLEOTIDE SEQUENCE [LARGE SCALE GENOMIC DNA]</scope>
    <source>
        <strain>ATCC 51907 / DSM 11121 / KW20 / Rd</strain>
    </source>
</reference>
<reference key="2">
    <citation type="submission" date="1996-09" db="EMBL/GenBank/DDBJ databases">
        <authorList>
            <person name="White O."/>
            <person name="Clayton R.A."/>
            <person name="Kerlavage A.R."/>
            <person name="Fleischmann R.D."/>
        </authorList>
    </citation>
    <scope>SEQUENCE REVISION</scope>
</reference>
<reference key="3">
    <citation type="journal article" date="2002" name="Proteins">
        <title>Structure of HI1333 (YhbY), a putative RNA-binding protein from Haemophilus influenzae.</title>
        <authorList>
            <person name="Willis M.A."/>
            <person name="Krajewski W."/>
            <person name="Chalamasetty V.R."/>
            <person name="Reddy P."/>
            <person name="Howard A."/>
            <person name="Herzberg O."/>
        </authorList>
    </citation>
    <scope>X-RAY CRYSTALLOGRAPHY (1.37 ANGSTROMS) OF 2-99</scope>
</reference>